<comment type="function">
    <text evidence="2 3">RNA-binding protein that is involved in the post-transcriptional regulation of mRNAs (By similarity). Plays a role in the regulation of mRNA stability, alternative splicing and translation (By similarity). Binds to AU-rich element (ARE) sequences in the 3' untranslated region (3'UTR) of target mRNAs (By similarity). Mainly plays a role in neuron-specific RNA processing (By similarity).</text>
</comment>
<comment type="subcellular location">
    <subcellularLocation>
        <location evidence="1">Cytoplasm</location>
    </subcellularLocation>
    <subcellularLocation>
        <location evidence="3">Perikaryon</location>
    </subcellularLocation>
    <subcellularLocation>
        <location evidence="3">Cell projection</location>
        <location evidence="3">Axon</location>
    </subcellularLocation>
    <subcellularLocation>
        <location evidence="3">Cell projection</location>
        <location evidence="3">Dendrite</location>
    </subcellularLocation>
    <subcellularLocation>
        <location evidence="3">Cell projection</location>
        <location evidence="3">Growth cone</location>
    </subcellularLocation>
</comment>
<comment type="similarity">
    <text evidence="5">Belongs to the RRM elav family.</text>
</comment>
<gene>
    <name type="primary">elavl4</name>
    <name evidence="4" type="synonym">elrD</name>
</gene>
<reference evidence="8" key="1">
    <citation type="submission" date="2007-03" db="EMBL/GenBank/DDBJ databases">
        <authorList>
            <consortium name="NIH - Xenopus Gene Collection (XGC) project"/>
        </authorList>
    </citation>
    <scope>NUCLEOTIDE SEQUENCE [LARGE SCALE MRNA]</scope>
    <source>
        <tissue evidence="8">Tadpole</tissue>
    </source>
</reference>
<accession>A4QNI8</accession>
<dbReference type="EMBL" id="BC135736">
    <property type="protein sequence ID" value="AAI35737.1"/>
    <property type="molecule type" value="mRNA"/>
</dbReference>
<dbReference type="RefSeq" id="NP_001096525.1">
    <property type="nucleotide sequence ID" value="NM_001103055.1"/>
</dbReference>
<dbReference type="SMR" id="A4QNI8"/>
<dbReference type="FunCoup" id="A4QNI8">
    <property type="interactions" value="538"/>
</dbReference>
<dbReference type="STRING" id="8364.ENSXETP00000007497"/>
<dbReference type="PaxDb" id="8364-ENSXETP00000018998"/>
<dbReference type="DNASU" id="100125165"/>
<dbReference type="GeneID" id="100125165"/>
<dbReference type="KEGG" id="xtr:100125165"/>
<dbReference type="AGR" id="Xenbase:XB-GENE-948210"/>
<dbReference type="CTD" id="1996"/>
<dbReference type="Xenbase" id="XB-GENE-948210">
    <property type="gene designation" value="elavl4"/>
</dbReference>
<dbReference type="eggNOG" id="KOG0145">
    <property type="taxonomic scope" value="Eukaryota"/>
</dbReference>
<dbReference type="InParanoid" id="A4QNI8"/>
<dbReference type="OrthoDB" id="266020at2759"/>
<dbReference type="Proteomes" id="UP000008143">
    <property type="component" value="Chromosome 4"/>
</dbReference>
<dbReference type="Bgee" id="ENSXETG00000008680">
    <property type="expression patterns" value="Expressed in brain and 5 other cell types or tissues"/>
</dbReference>
<dbReference type="ExpressionAtlas" id="A4QNI8">
    <property type="expression patterns" value="baseline and differential"/>
</dbReference>
<dbReference type="GO" id="GO:0005737">
    <property type="term" value="C:cytoplasm"/>
    <property type="evidence" value="ECO:0007669"/>
    <property type="project" value="UniProtKB-SubCell"/>
</dbReference>
<dbReference type="GO" id="GO:0030425">
    <property type="term" value="C:dendrite"/>
    <property type="evidence" value="ECO:0007669"/>
    <property type="project" value="UniProtKB-SubCell"/>
</dbReference>
<dbReference type="GO" id="GO:0030426">
    <property type="term" value="C:growth cone"/>
    <property type="evidence" value="ECO:0007669"/>
    <property type="project" value="UniProtKB-SubCell"/>
</dbReference>
<dbReference type="GO" id="GO:0043204">
    <property type="term" value="C:perikaryon"/>
    <property type="evidence" value="ECO:0007669"/>
    <property type="project" value="UniProtKB-SubCell"/>
</dbReference>
<dbReference type="GO" id="GO:1990904">
    <property type="term" value="C:ribonucleoprotein complex"/>
    <property type="evidence" value="ECO:0007669"/>
    <property type="project" value="UniProtKB-KW"/>
</dbReference>
<dbReference type="GO" id="GO:0003723">
    <property type="term" value="F:RNA binding"/>
    <property type="evidence" value="ECO:0007669"/>
    <property type="project" value="UniProtKB-KW"/>
</dbReference>
<dbReference type="CDD" id="cd12774">
    <property type="entry name" value="RRM2_HuD"/>
    <property type="match status" value="1"/>
</dbReference>
<dbReference type="CDD" id="cd12656">
    <property type="entry name" value="RRM3_HuD"/>
    <property type="match status" value="1"/>
</dbReference>
<dbReference type="FunFam" id="3.30.70.330:FF:000006">
    <property type="entry name" value="ELAV-like 3"/>
    <property type="match status" value="1"/>
</dbReference>
<dbReference type="FunFam" id="3.30.70.330:FF:000005">
    <property type="entry name" value="ELAV-like protein"/>
    <property type="match status" value="1"/>
</dbReference>
<dbReference type="FunFam" id="3.30.70.330:FF:000480">
    <property type="entry name" value="Fne, isoform A"/>
    <property type="match status" value="1"/>
</dbReference>
<dbReference type="Gene3D" id="3.30.70.330">
    <property type="match status" value="3"/>
</dbReference>
<dbReference type="InterPro" id="IPR006548">
    <property type="entry name" value="ELAD_HU_SF"/>
</dbReference>
<dbReference type="InterPro" id="IPR034918">
    <property type="entry name" value="HuD_RRM3"/>
</dbReference>
<dbReference type="InterPro" id="IPR002343">
    <property type="entry name" value="Hud_Sxl_RNA"/>
</dbReference>
<dbReference type="InterPro" id="IPR012677">
    <property type="entry name" value="Nucleotide-bd_a/b_plait_sf"/>
</dbReference>
<dbReference type="InterPro" id="IPR035979">
    <property type="entry name" value="RBD_domain_sf"/>
</dbReference>
<dbReference type="InterPro" id="IPR000504">
    <property type="entry name" value="RRM_dom"/>
</dbReference>
<dbReference type="NCBIfam" id="TIGR01661">
    <property type="entry name" value="ELAV_HUD_SF"/>
    <property type="match status" value="1"/>
</dbReference>
<dbReference type="PANTHER" id="PTHR10352">
    <property type="entry name" value="EUKARYOTIC TRANSLATION INITIATION FACTOR 3 SUBUNIT G"/>
    <property type="match status" value="1"/>
</dbReference>
<dbReference type="Pfam" id="PF00076">
    <property type="entry name" value="RRM_1"/>
    <property type="match status" value="4"/>
</dbReference>
<dbReference type="PRINTS" id="PR00961">
    <property type="entry name" value="HUDSXLRNA"/>
</dbReference>
<dbReference type="SMART" id="SM00360">
    <property type="entry name" value="RRM"/>
    <property type="match status" value="3"/>
</dbReference>
<dbReference type="SUPFAM" id="SSF54928">
    <property type="entry name" value="RNA-binding domain, RBD"/>
    <property type="match status" value="2"/>
</dbReference>
<dbReference type="PROSITE" id="PS50102">
    <property type="entry name" value="RRM"/>
    <property type="match status" value="3"/>
</dbReference>
<protein>
    <recommendedName>
        <fullName evidence="2">ELAV-like protein 4</fullName>
    </recommendedName>
    <alternativeName>
        <fullName evidence="4">Protein ElrD</fullName>
    </alternativeName>
</protein>
<evidence type="ECO:0000250" key="1">
    <source>
        <dbReference type="UniProtKB" id="O09032"/>
    </source>
</evidence>
<evidence type="ECO:0000250" key="2">
    <source>
        <dbReference type="UniProtKB" id="P26378"/>
    </source>
</evidence>
<evidence type="ECO:0000250" key="3">
    <source>
        <dbReference type="UniProtKB" id="Q61701"/>
    </source>
</evidence>
<evidence type="ECO:0000250" key="4">
    <source>
        <dbReference type="UniProtKB" id="Q7SZT7"/>
    </source>
</evidence>
<evidence type="ECO:0000255" key="5"/>
<evidence type="ECO:0000255" key="6">
    <source>
        <dbReference type="PROSITE-ProRule" id="PRU00176"/>
    </source>
</evidence>
<evidence type="ECO:0000256" key="7">
    <source>
        <dbReference type="SAM" id="MobiDB-lite"/>
    </source>
</evidence>
<evidence type="ECO:0000312" key="8">
    <source>
        <dbReference type="EMBL" id="AAI35737.1"/>
    </source>
</evidence>
<sequence length="400" mass="44239">MEWNGLKMIISTMEPQVSNGPTSNTSNGPSSNSRNCPSPMQTGAATDDSKTNLIVNYLPQNMTQEEFRSLFGSIGEIESCKLVRDKITGTQFEEHFKDLATGTKWKPLTEEGPIFGKGQSLGYGFVNYIDPKDAEKAINTLNGLRLQTKTIKVSYARPSSASIRDANLYVSGLPKTMTQKELEQLFSQYGRIITSRILVDQVTGVSRGVGFIRFDKRIEAEEAIKGLNGQKPSGAAEPITVKFANNPSQKTSQALLSQLYQSPNRRYPGPLHHQAQRFRLDNLLNMAYGVKRFSPITIDGMTSLVGMNIPGHTGTGWCIFVYNLSPDSDESVLWQLFGPFGAVNNVKVIRDFNTNKCKGFGFVTMTNYDEAAMAIASLNGYRLGDRVLQVSFKTNKTHKS</sequence>
<name>ELAV4_XENTR</name>
<organism>
    <name type="scientific">Xenopus tropicalis</name>
    <name type="common">Western clawed frog</name>
    <name type="synonym">Silurana tropicalis</name>
    <dbReference type="NCBI Taxonomy" id="8364"/>
    <lineage>
        <taxon>Eukaryota</taxon>
        <taxon>Metazoa</taxon>
        <taxon>Chordata</taxon>
        <taxon>Craniata</taxon>
        <taxon>Vertebrata</taxon>
        <taxon>Euteleostomi</taxon>
        <taxon>Amphibia</taxon>
        <taxon>Batrachia</taxon>
        <taxon>Anura</taxon>
        <taxon>Pipoidea</taxon>
        <taxon>Pipidae</taxon>
        <taxon>Xenopodinae</taxon>
        <taxon>Xenopus</taxon>
        <taxon>Silurana</taxon>
    </lineage>
</organism>
<feature type="chain" id="PRO_0000391376" description="ELAV-like protein 4">
    <location>
        <begin position="1"/>
        <end position="400"/>
    </location>
</feature>
<feature type="domain" description="RRM 1" evidence="6">
    <location>
        <begin position="51"/>
        <end position="158"/>
    </location>
</feature>
<feature type="domain" description="RRM 2" evidence="6">
    <location>
        <begin position="166"/>
        <end position="246"/>
    </location>
</feature>
<feature type="domain" description="RRM 3" evidence="6">
    <location>
        <begin position="317"/>
        <end position="395"/>
    </location>
</feature>
<feature type="region of interest" description="Disordered" evidence="7">
    <location>
        <begin position="12"/>
        <end position="48"/>
    </location>
</feature>
<feature type="compositionally biased region" description="Low complexity" evidence="7">
    <location>
        <begin position="18"/>
        <end position="33"/>
    </location>
</feature>
<feature type="compositionally biased region" description="Polar residues" evidence="7">
    <location>
        <begin position="34"/>
        <end position="44"/>
    </location>
</feature>
<proteinExistence type="evidence at transcript level"/>
<keyword id="KW-0966">Cell projection</keyword>
<keyword id="KW-0963">Cytoplasm</keyword>
<keyword id="KW-0217">Developmental protein</keyword>
<keyword id="KW-1185">Reference proteome</keyword>
<keyword id="KW-0677">Repeat</keyword>
<keyword id="KW-0687">Ribonucleoprotein</keyword>
<keyword id="KW-0694">RNA-binding</keyword>